<accession>Q9GZX7</accession>
<accession>Q6QJ81</accession>
<accession>Q8NFC1</accession>
<comment type="function">
    <text evidence="9 11 12 13 20">Single-stranded DNA-specific cytidine deaminase. Involved in somatic hypermutation (SHM), gene conversion, and class-switch recombination (CSR) in B-lymphocytes by deaminating C to U during transcription of Ig-variable (V) and Ig-switch (S) region DNA. Required for several crucial steps of B-cell terminal differentiation necessary for efficient antibody responses (PubMed:18722174, PubMed:21385873, PubMed:21518874, PubMed:27716525). May also play a role in the epigenetic regulation of gene expression by participating in DNA demethylation (PubMed:21496894).</text>
</comment>
<comment type="catalytic activity">
    <reaction evidence="9">
        <text>a 2'-deoxycytidine in single-stranded DNA + H2O + H(+) = a 2'-deoxyuridine in single-stranded DNA + NH4(+)</text>
        <dbReference type="Rhea" id="RHEA:50948"/>
        <dbReference type="Rhea" id="RHEA-COMP:12846"/>
        <dbReference type="Rhea" id="RHEA-COMP:12847"/>
        <dbReference type="ChEBI" id="CHEBI:15377"/>
        <dbReference type="ChEBI" id="CHEBI:15378"/>
        <dbReference type="ChEBI" id="CHEBI:28938"/>
        <dbReference type="ChEBI" id="CHEBI:85452"/>
        <dbReference type="ChEBI" id="CHEBI:133902"/>
        <dbReference type="EC" id="3.5.4.38"/>
    </reaction>
</comment>
<comment type="cofactor">
    <cofactor evidence="19">
        <name>Zn(2+)</name>
        <dbReference type="ChEBI" id="CHEBI:29105"/>
    </cofactor>
</comment>
<comment type="subunit">
    <text evidence="2 8 9 10 11 13 16 21">Interacts with CTNNBL1; the interaction is important for the immunoglobulin switch activity of AICDA (PubMed:18722174, PubMed:21385873, PubMed:32484799). Interacts (via its NLS) with KPNA1. Interacts with PKA/PRKACA and PRKAR1A/PKR1 (PubMed:16387847). Interacts with TRIM28 and NCL (By similarity). Interacts with SUPT6H (PubMed:21518874). Interacts with RNF126 (PubMed:23277564). Directly interacts with MCM3AP; this interaction may favor AICDA recruitment to immunoglobulin variable region genes, hence promoting somatic hypermutations (PubMed:20507984).</text>
</comment>
<comment type="interaction">
    <interactant intactId="EBI-3834328">
        <id>Q9GZX7</id>
    </interactant>
    <interactant intactId="EBI-3834328">
        <id>Q9GZX7</id>
        <label>AICDA</label>
    </interactant>
    <organismsDiffer>false</organismsDiffer>
    <experiments>2</experiments>
</comment>
<comment type="interaction">
    <interactant intactId="EBI-3834328">
        <id>Q9GZX7</id>
    </interactant>
    <interactant intactId="EBI-347834">
        <id>P31689</id>
        <label>DNAJA1</label>
    </interactant>
    <organismsDiffer>false</organismsDiffer>
    <experiments>6</experiments>
</comment>
<comment type="interaction">
    <interactant intactId="EBI-3834328">
        <id>Q9GZX7</id>
    </interactant>
    <interactant intactId="EBI-352957">
        <id>O60884</id>
        <label>DNAJA2</label>
    </interactant>
    <organismsDiffer>false</organismsDiffer>
    <experiments>3</experiments>
</comment>
<comment type="interaction">
    <interactant intactId="EBI-3834328">
        <id>Q9GZX7</id>
    </interactant>
    <interactant intactId="EBI-448167">
        <id>P24522</id>
        <label>GADD45A</label>
    </interactant>
    <organismsDiffer>false</organismsDiffer>
    <experiments>5</experiments>
</comment>
<comment type="interaction">
    <interactant intactId="EBI-3834328">
        <id>Q9GZX7</id>
    </interactant>
    <interactant intactId="EBI-351896">
        <id>P11142</id>
        <label>HSPA8</label>
    </interactant>
    <organismsDiffer>false</organismsDiffer>
    <experiments>2</experiments>
</comment>
<comment type="interaction">
    <interactant intactId="EBI-3834328">
        <id>Q9GZX7</id>
    </interactant>
    <interactant intactId="EBI-358383">
        <id>P52294</id>
        <label>KPNA1</label>
    </interactant>
    <organismsDiffer>false</organismsDiffer>
    <experiments>2</experiments>
</comment>
<comment type="interaction">
    <interactant intactId="EBI-3834328">
        <id>Q9GZX7</id>
    </interactant>
    <interactant intactId="EBI-358297">
        <id>O00505</id>
        <label>KPNA3</label>
    </interactant>
    <organismsDiffer>false</organismsDiffer>
    <experiments>2</experiments>
</comment>
<comment type="interaction">
    <interactant intactId="EBI-3834328">
        <id>Q9GZX7</id>
    </interactant>
    <interactant intactId="EBI-540602">
        <id>O15131</id>
        <label>KPNA5</label>
    </interactant>
    <organismsDiffer>false</organismsDiffer>
    <experiments>2</experiments>
</comment>
<comment type="interaction">
    <interactant intactId="EBI-3834328">
        <id>Q9GZX7</id>
    </interactant>
    <interactant intactId="EBI-476586">
        <id>P17612</id>
        <label>PRKACA</label>
    </interactant>
    <organismsDiffer>false</organismsDiffer>
    <experiments>3</experiments>
</comment>
<comment type="interaction">
    <interactant intactId="EBI-3834328">
        <id>Q9GZX7</id>
    </interactant>
    <interactant intactId="EBI-476431">
        <id>P10644</id>
        <label>PRKAR1A</label>
    </interactant>
    <organismsDiffer>false</organismsDiffer>
    <experiments>5</experiments>
</comment>
<comment type="interaction">
    <interactant intactId="EBI-3834328">
        <id>Q9GZX7</id>
    </interactant>
    <interactant intactId="EBI-348333">
        <id>Q13569</id>
        <label>TDG</label>
    </interactant>
    <organismsDiffer>false</organismsDiffer>
    <experiments>5</experiments>
</comment>
<comment type="interaction">
    <interactant intactId="EBI-3834328">
        <id>Q9GZX7</id>
    </interactant>
    <interactant intactId="EBI-11666471">
        <id>Q784Z8</id>
        <label>C</label>
    </interactant>
    <organismsDiffer>true</organismsDiffer>
    <experiments>2</experiments>
</comment>
<comment type="subcellular location">
    <subcellularLocation>
        <location evidence="11 21">Nucleus</location>
    </subcellularLocation>
    <subcellularLocation>
        <location evidence="9 11 15 21">Cytoplasm</location>
        <location evidence="9 11 15 21">Cytosol</location>
    </subcellularLocation>
    <text evidence="2 11">Predominantly cytosolic (PubMed:21385873). In the presence of MCM3AP/GANP, relocalizes to the nucleus (By similarity).</text>
</comment>
<comment type="alternative products">
    <event type="alternative splicing"/>
    <isoform>
        <id>Q9GZX7-1</id>
        <name>1</name>
        <sequence type="displayed"/>
    </isoform>
    <isoform>
        <id>Q9GZX7-2</id>
        <name>2</name>
        <sequence type="described" ref="VSP_047803"/>
    </isoform>
</comment>
<comment type="tissue specificity">
    <text evidence="15">Strongly expressed in lymph nodes and tonsils.</text>
</comment>
<comment type="induction">
    <text evidence="15">Negatively regulated by microRNA-155 (miR-155).</text>
</comment>
<comment type="PTM">
    <text evidence="8 9">Ser-38 is the major site whereas Thr-27 is the minor site of phosphorylation. Phosphorylation regulates its class-switch recombination activity.</text>
</comment>
<comment type="PTM">
    <text evidence="16">Probably monoubiquitinated on several residues by RNF126.</text>
</comment>
<comment type="disease" evidence="4 7 17 18 20">
    <disease id="DI-01241">
        <name>Immunodeficiency with hyper-IgM 2</name>
        <acronym>HIGM2</acronym>
        <description>A rare immunodeficiency syndrome characterized by normal or elevated serum IgM levels with absence of IgG, IgA, and IgE. It results in a profound susceptibility to bacterial infections.</description>
        <dbReference type="MIM" id="605258"/>
    </disease>
    <text>The disease is caused by variants affecting the gene represented in this entry.</text>
</comment>
<comment type="similarity">
    <text evidence="23">Belongs to the cytidine and deoxycytidylate deaminase family.</text>
</comment>
<comment type="online information" name="AICDAbase">
    <link uri="https://databases.lovd.nl/shared/genes/AICDA"/>
    <text>AICDA mutation db</text>
</comment>
<name>AICDA_HUMAN</name>
<proteinExistence type="evidence at protein level"/>
<feature type="chain" id="PRO_0000171687" description="Single-stranded DNA cytosine deaminase">
    <location>
        <begin position="1"/>
        <end position="198"/>
    </location>
</feature>
<feature type="domain" description="CMP/dCMP-type deaminase" evidence="3">
    <location>
        <begin position="23"/>
        <end position="129"/>
    </location>
</feature>
<feature type="region of interest" description="Interaction with SUPT6H" evidence="13">
    <location>
        <begin position="2"/>
        <end position="26"/>
    </location>
</feature>
<feature type="region of interest" description="Important for interaction with CTNNBL1" evidence="9">
    <location>
        <begin position="39"/>
        <end position="42"/>
    </location>
</feature>
<feature type="region of interest" description="Required for interaction with RNF126" evidence="16">
    <location>
        <begin position="88"/>
        <end position="116"/>
    </location>
</feature>
<feature type="short sequence motif" description="Bipartite nuclear localization signal" evidence="6">
    <location>
        <begin position="1"/>
        <end position="30"/>
    </location>
</feature>
<feature type="short sequence motif" description="Nuclear export signal" evidence="6">
    <location>
        <begin position="183"/>
        <end position="198"/>
    </location>
</feature>
<feature type="active site" description="Proton donor" evidence="1">
    <location>
        <position position="58"/>
    </location>
</feature>
<feature type="binding site" evidence="19">
    <location>
        <position position="56"/>
    </location>
    <ligand>
        <name>Zn(2+)</name>
        <dbReference type="ChEBI" id="CHEBI:29105"/>
        <note>catalytic</note>
    </ligand>
</feature>
<feature type="binding site" evidence="19">
    <location>
        <position position="87"/>
    </location>
    <ligand>
        <name>Zn(2+)</name>
        <dbReference type="ChEBI" id="CHEBI:29105"/>
        <note>catalytic</note>
    </ligand>
</feature>
<feature type="binding site" evidence="19">
    <location>
        <position position="90"/>
    </location>
    <ligand>
        <name>Zn(2+)</name>
        <dbReference type="ChEBI" id="CHEBI:29105"/>
        <note>catalytic</note>
    </ligand>
</feature>
<feature type="modified residue" description="Phosphothreonine; by PKA" evidence="8">
    <location>
        <position position="27"/>
    </location>
</feature>
<feature type="modified residue" description="Phosphoserine; by PKA" evidence="8 9">
    <location>
        <position position="38"/>
    </location>
</feature>
<feature type="splice variant" id="VSP_047803" description="In isoform 2." evidence="22">
    <location>
        <begin position="143"/>
        <end position="152"/>
    </location>
</feature>
<feature type="sequence variant" id="VAR_077563" description="In HIGM2; dbSNP:rs2136433362 and dbSNP:rs2136433359." evidence="17">
    <original>F</original>
    <variation>L</variation>
    <location>
        <position position="15"/>
    </location>
</feature>
<feature type="sequence variant" id="VAR_013774" description="In HIGM2; completely abolishes nuclear import and interaction with CTNNBL1, diminishes interaction with KPNA1 and abolishes immunoglobulin class switching; dbSNP:rs104894324." evidence="4 7 11">
    <original>R</original>
    <variation>W</variation>
    <location>
        <position position="24"/>
    </location>
</feature>
<feature type="sequence variant" id="VAR_014091" description="In dbSNP:rs1404944797." evidence="5">
    <original>R</original>
    <variation>C</variation>
    <location>
        <position position="25"/>
    </location>
</feature>
<feature type="sequence variant" id="VAR_077564" description="In HIGM2." evidence="18">
    <original>Y</original>
    <variation>H</variation>
    <location>
        <position position="31"/>
    </location>
</feature>
<feature type="sequence variant" id="VAR_077565" description="In HIGM2; uncertain significance; loss of mutagenic activity." evidence="7 20">
    <original>H</original>
    <variation>Y</variation>
    <location>
        <position position="56"/>
    </location>
</feature>
<feature type="sequence variant" id="VAR_013775" description="In HIGM2; dbSNP:rs104894320." evidence="4 7">
    <original>W</original>
    <variation>R</variation>
    <location>
        <position position="80"/>
    </location>
</feature>
<feature type="sequence variant" id="VAR_077566" description="In HIGM2; uncertain significance; dbSNP:rs762590894." evidence="7">
    <original>C</original>
    <variation>R</variation>
    <location>
        <position position="87"/>
    </location>
</feature>
<feature type="sequence variant" id="VAR_013776" description="In HIGM2; dbSNP:rs104894321." evidence="4 7">
    <original>L</original>
    <variation>P</variation>
    <location>
        <position position="106"/>
    </location>
</feature>
<feature type="sequence variant" id="VAR_077567" description="In HIGM2; slightly decreased mutagenic activity." evidence="18 20">
    <original>H</original>
    <variation>P</variation>
    <location>
        <position position="130"/>
    </location>
</feature>
<feature type="sequence variant" id="VAR_013777" description="In HIGM2; dbSNP:rs104894322." evidence="4 7">
    <original>M</original>
    <variation>V</variation>
    <location>
        <position position="139"/>
    </location>
</feature>
<feature type="sequence variant" id="VAR_013778" description="In HIGM2; dbSNP:rs104894327." evidence="4 7">
    <original>F</original>
    <variation>S</variation>
    <location>
        <position position="151"/>
    </location>
</feature>
<feature type="sequence variant" id="VAR_077568" description="In HIGM2; uncertain significance." evidence="7">
    <original>R</original>
    <variation>S</variation>
    <location>
        <position position="174"/>
    </location>
</feature>
<feature type="mutagenesis site" description="Little effect on nuclear import; when associated with A-193. No effect on CTNNBL1 binding." evidence="11">
    <original>K</original>
    <variation>A</variation>
    <location>
        <position position="10"/>
    </location>
</feature>
<feature type="mutagenesis site" description="Greatly impaired nuclear import; when associated with V-19 and A-193. Reduced interaction with both CTNNBL1 and KPNA1, and abolishes immunoglobulin class switching; when associated with V-19." evidence="11">
    <original>V</original>
    <variation>S</variation>
    <location>
        <position position="18"/>
    </location>
</feature>
<feature type="mutagenesis site" description="Greatly impaired nuclear import; when associated with S-18 and A-193. Reduced interaction with both CTNNBL1 and KPNA1, and abolishes immunoglobulin class switching; when associated with S-18." evidence="11">
    <original>R</original>
    <variation>V</variation>
    <location>
        <position position="19"/>
    </location>
</feature>
<feature type="mutagenesis site" description="Impaired nuclear import; when associated with A-193. No effect on CTNNBL1 binding." evidence="11">
    <original>W</original>
    <variation>K</variation>
    <location>
        <position position="20"/>
    </location>
</feature>
<feature type="mutagenesis site" description="Loss of phosphorylation. No effect on cytidine deaminase activity. Impaired class-switch recombination activity." evidence="8 14">
    <original>T</original>
    <variation>A</variation>
    <location>
        <position position="27"/>
    </location>
</feature>
<feature type="mutagenesis site" description="Phosphomimetic mutant which shows loss of cytidine deaminase activity and impaired class-switch recombination activity." evidence="8 14">
    <original>T</original>
    <variation>E</variation>
    <location>
        <position position="27"/>
    </location>
</feature>
<feature type="mutagenesis site" description="Loss of phosphorylation. Impaired class-switch recombination activity. No effect on interaction with CTNNBL1." evidence="8 9">
    <original>S</original>
    <variation>A</variation>
    <location>
        <position position="38"/>
    </location>
</feature>
<feature type="mutagenesis site" description="No effect on interaction with CTNNBL1." evidence="8 9">
    <original>S</original>
    <variation>D</variation>
    <location>
        <position position="38"/>
    </location>
</feature>
<feature type="mutagenesis site" description="Greatly reduced interaction with CTNNBL1 but no effect on subcellular location, enzyme activity, ability to oligomerize nor on phosphorylation at Ser-38. Diminished antibody diversification." evidence="9">
    <original>ATSF</original>
    <variation>GGQV</variation>
    <location>
        <begin position="39"/>
        <end position="42"/>
    </location>
</feature>
<feature type="mutagenesis site" description="Some reduced nuclear import; when associated with A-193." evidence="11">
    <original>R</original>
    <variation>G</variation>
    <location>
        <position position="50"/>
    </location>
</feature>
<feature type="mutagenesis site" description="Greatly reduced nuclear import; when associated with A-193." evidence="11">
    <original>R</original>
    <variation>D</variation>
    <location>
        <position position="112"/>
    </location>
</feature>
<feature type="mutagenesis site" description="Completely abolishes nuclear import; when associated with W-24 or D-112. Little affect on nuclear import; when associated with A-10. Greatly impaired nuclear import; when associated with K-20 or G-50. Almost completely abolishes nuclear import; when associated with S-18 and V-19." evidence="11">
    <original>F</original>
    <variation>A</variation>
    <location>
        <position position="193"/>
    </location>
</feature>
<feature type="sequence conflict" description="In Ref. 3; AAM95406." evidence="23" ref="3">
    <original>R</original>
    <variation>H</variation>
    <location>
        <position position="119"/>
    </location>
</feature>
<feature type="helix" evidence="26">
    <location>
        <begin position="8"/>
        <end position="15"/>
    </location>
</feature>
<feature type="strand" evidence="25">
    <location>
        <begin position="18"/>
        <end position="20"/>
    </location>
</feature>
<feature type="strand" evidence="24">
    <location>
        <begin position="28"/>
        <end position="34"/>
    </location>
</feature>
<feature type="strand" evidence="24">
    <location>
        <begin position="36"/>
        <end position="40"/>
    </location>
</feature>
<feature type="strand" evidence="24">
    <location>
        <begin position="43"/>
        <end position="50"/>
    </location>
</feature>
<feature type="helix" evidence="24">
    <location>
        <begin position="57"/>
        <end position="66"/>
    </location>
</feature>
<feature type="strand" evidence="24">
    <location>
        <begin position="72"/>
        <end position="74"/>
    </location>
</feature>
<feature type="strand" evidence="24">
    <location>
        <begin position="76"/>
        <end position="84"/>
    </location>
</feature>
<feature type="helix" evidence="24">
    <location>
        <begin position="88"/>
        <end position="100"/>
    </location>
</feature>
<feature type="strand" evidence="24">
    <location>
        <begin position="104"/>
        <end position="112"/>
    </location>
</feature>
<feature type="turn" evidence="24">
    <location>
        <begin position="117"/>
        <end position="119"/>
    </location>
</feature>
<feature type="helix" evidence="24">
    <location>
        <begin position="122"/>
        <end position="132"/>
    </location>
</feature>
<feature type="strand" evidence="24">
    <location>
        <begin position="135"/>
        <end position="138"/>
    </location>
</feature>
<feature type="helix" evidence="24">
    <location>
        <begin position="141"/>
        <end position="148"/>
    </location>
</feature>
<feature type="helix" evidence="24">
    <location>
        <begin position="165"/>
        <end position="179"/>
    </location>
</feature>
<organism>
    <name type="scientific">Homo sapiens</name>
    <name type="common">Human</name>
    <dbReference type="NCBI Taxonomy" id="9606"/>
    <lineage>
        <taxon>Eukaryota</taxon>
        <taxon>Metazoa</taxon>
        <taxon>Chordata</taxon>
        <taxon>Craniata</taxon>
        <taxon>Vertebrata</taxon>
        <taxon>Euteleostomi</taxon>
        <taxon>Mammalia</taxon>
        <taxon>Eutheria</taxon>
        <taxon>Euarchontoglires</taxon>
        <taxon>Primates</taxon>
        <taxon>Haplorrhini</taxon>
        <taxon>Catarrhini</taxon>
        <taxon>Hominidae</taxon>
        <taxon>Homo</taxon>
    </lineage>
</organism>
<keyword id="KW-0002">3D-structure</keyword>
<keyword id="KW-0025">Alternative splicing</keyword>
<keyword id="KW-0963">Cytoplasm</keyword>
<keyword id="KW-0225">Disease variant</keyword>
<keyword id="KW-0378">Hydrolase</keyword>
<keyword id="KW-0479">Metal-binding</keyword>
<keyword id="KW-0507">mRNA processing</keyword>
<keyword id="KW-0539">Nucleus</keyword>
<keyword id="KW-0597">Phosphoprotein</keyword>
<keyword id="KW-1267">Proteomics identification</keyword>
<keyword id="KW-1185">Reference proteome</keyword>
<keyword id="KW-0832">Ubl conjugation</keyword>
<keyword id="KW-0862">Zinc</keyword>
<protein>
    <recommendedName>
        <fullName>Single-stranded DNA cytosine deaminase</fullName>
        <ecNumber evidence="9">3.5.4.38</ecNumber>
    </recommendedName>
    <alternativeName>
        <fullName>Activation-induced cytidine deaminase</fullName>
        <shortName>AID</shortName>
    </alternativeName>
    <alternativeName>
        <fullName>Cytidine aminohydrolase</fullName>
    </alternativeName>
</protein>
<dbReference type="EC" id="3.5.4.38" evidence="9"/>
<dbReference type="EMBL" id="AB040431">
    <property type="protein sequence ID" value="BAB12721.1"/>
    <property type="molecule type" value="mRNA"/>
</dbReference>
<dbReference type="EMBL" id="AB040430">
    <property type="protein sequence ID" value="BAB12720.1"/>
    <property type="molecule type" value="Genomic_DNA"/>
</dbReference>
<dbReference type="EMBL" id="AF529819">
    <property type="protein sequence ID" value="AAM95406.1"/>
    <property type="molecule type" value="mRNA"/>
</dbReference>
<dbReference type="EMBL" id="AY536516">
    <property type="protein sequence ID" value="AAS92920.1"/>
    <property type="molecule type" value="mRNA"/>
</dbReference>
<dbReference type="EMBL" id="BT007402">
    <property type="protein sequence ID" value="AAP36066.1"/>
    <property type="molecule type" value="mRNA"/>
</dbReference>
<dbReference type="EMBL" id="AC092184">
    <property type="status" value="NOT_ANNOTATED_CDS"/>
    <property type="molecule type" value="Genomic_DNA"/>
</dbReference>
<dbReference type="EMBL" id="BC006296">
    <property type="protein sequence ID" value="AAH06296.1"/>
    <property type="molecule type" value="mRNA"/>
</dbReference>
<dbReference type="CCDS" id="CCDS41747.1">
    <molecule id="Q9GZX7-1"/>
</dbReference>
<dbReference type="CCDS" id="CCDS81662.1">
    <molecule id="Q9GZX7-2"/>
</dbReference>
<dbReference type="RefSeq" id="NP_001317272.1">
    <molecule id="Q9GZX7-2"/>
    <property type="nucleotide sequence ID" value="NM_001330343.2"/>
</dbReference>
<dbReference type="RefSeq" id="NP_065712.1">
    <molecule id="Q9GZX7-1"/>
    <property type="nucleotide sequence ID" value="NM_020661.4"/>
</dbReference>
<dbReference type="PDB" id="5JJ4">
    <property type="method" value="X-ray"/>
    <property type="resolution" value="2.81 A"/>
    <property type="chains" value="A/B/C=23-183"/>
</dbReference>
<dbReference type="PDB" id="5W0R">
    <property type="method" value="X-ray"/>
    <property type="resolution" value="2.40 A"/>
    <property type="chains" value="A/B=13-181"/>
</dbReference>
<dbReference type="PDB" id="5W0U">
    <property type="method" value="X-ray"/>
    <property type="resolution" value="2.90 A"/>
    <property type="chains" value="A/B=13-181"/>
</dbReference>
<dbReference type="PDB" id="5W0Z">
    <property type="method" value="X-ray"/>
    <property type="resolution" value="3.61 A"/>
    <property type="chains" value="A/B=13-181"/>
</dbReference>
<dbReference type="PDB" id="5W1C">
    <property type="method" value="X-ray"/>
    <property type="resolution" value="3.18 A"/>
    <property type="chains" value="A/B=5-181"/>
</dbReference>
<dbReference type="PDBsum" id="5JJ4"/>
<dbReference type="PDBsum" id="5W0R"/>
<dbReference type="PDBsum" id="5W0U"/>
<dbReference type="PDBsum" id="5W0Z"/>
<dbReference type="PDBsum" id="5W1C"/>
<dbReference type="SMR" id="Q9GZX7"/>
<dbReference type="BioGRID" id="121497">
    <property type="interactions" value="71"/>
</dbReference>
<dbReference type="DIP" id="DIP-48519N"/>
<dbReference type="ELM" id="Q9GZX7"/>
<dbReference type="FunCoup" id="Q9GZX7">
    <property type="interactions" value="102"/>
</dbReference>
<dbReference type="IntAct" id="Q9GZX7">
    <property type="interactions" value="31"/>
</dbReference>
<dbReference type="MINT" id="Q9GZX7"/>
<dbReference type="STRING" id="9606.ENSP00000229335"/>
<dbReference type="iPTMnet" id="Q9GZX7"/>
<dbReference type="PhosphoSitePlus" id="Q9GZX7"/>
<dbReference type="BioMuta" id="AICDA"/>
<dbReference type="DMDM" id="23813666"/>
<dbReference type="MassIVE" id="Q9GZX7"/>
<dbReference type="PaxDb" id="9606-ENSP00000229335"/>
<dbReference type="PeptideAtlas" id="Q9GZX7"/>
<dbReference type="ProteomicsDB" id="67301"/>
<dbReference type="ProteomicsDB" id="80168">
    <molecule id="Q9GZX7-1"/>
</dbReference>
<dbReference type="Antibodypedia" id="6178">
    <property type="antibodies" value="429 antibodies from 42 providers"/>
</dbReference>
<dbReference type="DNASU" id="57379"/>
<dbReference type="Ensembl" id="ENST00000229335.11">
    <molecule id="Q9GZX7-1"/>
    <property type="protein sequence ID" value="ENSP00000229335.6"/>
    <property type="gene ID" value="ENSG00000111732.12"/>
</dbReference>
<dbReference type="Ensembl" id="ENST00000537228.6">
    <molecule id="Q9GZX7-2"/>
    <property type="protein sequence ID" value="ENSP00000445691.1"/>
    <property type="gene ID" value="ENSG00000111732.12"/>
</dbReference>
<dbReference type="GeneID" id="57379"/>
<dbReference type="KEGG" id="hsa:57379"/>
<dbReference type="MANE-Select" id="ENST00000229335.11">
    <property type="protein sequence ID" value="ENSP00000229335.6"/>
    <property type="RefSeq nucleotide sequence ID" value="NM_020661.4"/>
    <property type="RefSeq protein sequence ID" value="NP_065712.1"/>
</dbReference>
<dbReference type="UCSC" id="uc001qur.3">
    <molecule id="Q9GZX7-1"/>
    <property type="organism name" value="human"/>
</dbReference>
<dbReference type="AGR" id="HGNC:13203"/>
<dbReference type="CTD" id="57379"/>
<dbReference type="DisGeNET" id="57379"/>
<dbReference type="GeneCards" id="AICDA"/>
<dbReference type="HGNC" id="HGNC:13203">
    <property type="gene designation" value="AICDA"/>
</dbReference>
<dbReference type="HPA" id="ENSG00000111732">
    <property type="expression patterns" value="Tissue enriched (lymphoid)"/>
</dbReference>
<dbReference type="MalaCards" id="AICDA"/>
<dbReference type="MIM" id="605257">
    <property type="type" value="gene"/>
</dbReference>
<dbReference type="MIM" id="605258">
    <property type="type" value="phenotype"/>
</dbReference>
<dbReference type="neXtProt" id="NX_Q9GZX7"/>
<dbReference type="OpenTargets" id="ENSG00000111732"/>
<dbReference type="Orphanet" id="101089">
    <property type="disease" value="Hyper-IgM syndrome type 2"/>
</dbReference>
<dbReference type="PharmGKB" id="PA24644"/>
<dbReference type="VEuPathDB" id="HostDB:ENSG00000111732"/>
<dbReference type="eggNOG" id="KOG4075">
    <property type="taxonomic scope" value="Eukaryota"/>
</dbReference>
<dbReference type="GeneTree" id="ENSGT00940000158731"/>
<dbReference type="InParanoid" id="Q9GZX7"/>
<dbReference type="OMA" id="CSLLMKQ"/>
<dbReference type="OrthoDB" id="8676111at2759"/>
<dbReference type="PAN-GO" id="Q9GZX7">
    <property type="GO annotations" value="12 GO annotations based on evolutionary models"/>
</dbReference>
<dbReference type="PhylomeDB" id="Q9GZX7"/>
<dbReference type="TreeFam" id="TF331356"/>
<dbReference type="BRENDA" id="3.5.4.38">
    <property type="organism ID" value="2681"/>
</dbReference>
<dbReference type="PathwayCommons" id="Q9GZX7"/>
<dbReference type="Reactome" id="R-HSA-9821002">
    <property type="pathway name" value="Chromatin modifications during the maternal to zygotic transition (MZT)"/>
</dbReference>
<dbReference type="SignaLink" id="Q9GZX7"/>
<dbReference type="SIGNOR" id="Q9GZX7"/>
<dbReference type="BioGRID-ORCS" id="57379">
    <property type="hits" value="8 hits in 1141 CRISPR screens"/>
</dbReference>
<dbReference type="ChiTaRS" id="AICDA">
    <property type="organism name" value="human"/>
</dbReference>
<dbReference type="GeneWiki" id="AICDA"/>
<dbReference type="GenomeRNAi" id="57379"/>
<dbReference type="Pharos" id="Q9GZX7">
    <property type="development level" value="Tbio"/>
</dbReference>
<dbReference type="PRO" id="PR:Q9GZX7"/>
<dbReference type="Proteomes" id="UP000005640">
    <property type="component" value="Chromosome 12"/>
</dbReference>
<dbReference type="RNAct" id="Q9GZX7">
    <property type="molecule type" value="protein"/>
</dbReference>
<dbReference type="Bgee" id="ENSG00000111732">
    <property type="expression patterns" value="Expressed in buccal mucosa cell and 93 other cell types or tissues"/>
</dbReference>
<dbReference type="ExpressionAtlas" id="Q9GZX7">
    <property type="expression patterns" value="baseline and differential"/>
</dbReference>
<dbReference type="GO" id="GO:0005737">
    <property type="term" value="C:cytoplasm"/>
    <property type="evidence" value="ECO:0000314"/>
    <property type="project" value="UniProtKB"/>
</dbReference>
<dbReference type="GO" id="GO:0005829">
    <property type="term" value="C:cytosol"/>
    <property type="evidence" value="ECO:0007669"/>
    <property type="project" value="UniProtKB-SubCell"/>
</dbReference>
<dbReference type="GO" id="GO:0005634">
    <property type="term" value="C:nucleus"/>
    <property type="evidence" value="ECO:0000314"/>
    <property type="project" value="UniProtKB"/>
</dbReference>
<dbReference type="GO" id="GO:0000932">
    <property type="term" value="C:P-body"/>
    <property type="evidence" value="ECO:0000318"/>
    <property type="project" value="GO_Central"/>
</dbReference>
<dbReference type="GO" id="GO:0032991">
    <property type="term" value="C:protein-containing complex"/>
    <property type="evidence" value="ECO:0000353"/>
    <property type="project" value="GO_Central"/>
</dbReference>
<dbReference type="GO" id="GO:0004126">
    <property type="term" value="F:cytidine deaminase activity"/>
    <property type="evidence" value="ECO:0000314"/>
    <property type="project" value="UniProtKB"/>
</dbReference>
<dbReference type="GO" id="GO:0042802">
    <property type="term" value="F:identical protein binding"/>
    <property type="evidence" value="ECO:0000353"/>
    <property type="project" value="IntAct"/>
</dbReference>
<dbReference type="GO" id="GO:0003723">
    <property type="term" value="F:RNA binding"/>
    <property type="evidence" value="ECO:0000318"/>
    <property type="project" value="GO_Central"/>
</dbReference>
<dbReference type="GO" id="GO:0031625">
    <property type="term" value="F:ubiquitin protein ligase binding"/>
    <property type="evidence" value="ECO:0000353"/>
    <property type="project" value="UniProtKB"/>
</dbReference>
<dbReference type="GO" id="GO:0008270">
    <property type="term" value="F:zinc ion binding"/>
    <property type="evidence" value="ECO:0007669"/>
    <property type="project" value="InterPro"/>
</dbReference>
<dbReference type="GO" id="GO:0030183">
    <property type="term" value="P:B cell differentiation"/>
    <property type="evidence" value="ECO:0000303"/>
    <property type="project" value="UniProtKB"/>
</dbReference>
<dbReference type="GO" id="GO:0071222">
    <property type="term" value="P:cellular response to lipopolysaccharide"/>
    <property type="evidence" value="ECO:0007669"/>
    <property type="project" value="Ensembl"/>
</dbReference>
<dbReference type="GO" id="GO:0009972">
    <property type="term" value="P:cytidine deamination"/>
    <property type="evidence" value="ECO:0007669"/>
    <property type="project" value="Ensembl"/>
</dbReference>
<dbReference type="GO" id="GO:0016554">
    <property type="term" value="P:cytidine to uridine editing"/>
    <property type="evidence" value="ECO:0000318"/>
    <property type="project" value="GO_Central"/>
</dbReference>
<dbReference type="GO" id="GO:0042742">
    <property type="term" value="P:defense response to bacterium"/>
    <property type="evidence" value="ECO:0007669"/>
    <property type="project" value="Ensembl"/>
</dbReference>
<dbReference type="GO" id="GO:0051607">
    <property type="term" value="P:defense response to virus"/>
    <property type="evidence" value="ECO:0000318"/>
    <property type="project" value="GO_Central"/>
</dbReference>
<dbReference type="GO" id="GO:0070383">
    <property type="term" value="P:DNA cytosine deamination"/>
    <property type="evidence" value="ECO:0000318"/>
    <property type="project" value="GO_Central"/>
</dbReference>
<dbReference type="GO" id="GO:0045190">
    <property type="term" value="P:isotype switching"/>
    <property type="evidence" value="ECO:0007669"/>
    <property type="project" value="Ensembl"/>
</dbReference>
<dbReference type="GO" id="GO:0006397">
    <property type="term" value="P:mRNA processing"/>
    <property type="evidence" value="ECO:0007669"/>
    <property type="project" value="UniProtKB-KW"/>
</dbReference>
<dbReference type="GO" id="GO:0045869">
    <property type="term" value="P:negative regulation of single stranded viral RNA replication via double stranded DNA intermediate"/>
    <property type="evidence" value="ECO:0000318"/>
    <property type="project" value="GO_Central"/>
</dbReference>
<dbReference type="GO" id="GO:0044029">
    <property type="term" value="P:positive regulation of gene expression via chromosomal CpG island demethylation"/>
    <property type="evidence" value="ECO:0000314"/>
    <property type="project" value="UniProtKB"/>
</dbReference>
<dbReference type="GO" id="GO:0033262">
    <property type="term" value="P:regulation of nuclear cell cycle DNA replication"/>
    <property type="evidence" value="ECO:0000315"/>
    <property type="project" value="UniProtKB"/>
</dbReference>
<dbReference type="GO" id="GO:0016445">
    <property type="term" value="P:somatic diversification of immunoglobulins"/>
    <property type="evidence" value="ECO:0000314"/>
    <property type="project" value="UniProtKB"/>
</dbReference>
<dbReference type="GO" id="GO:0016446">
    <property type="term" value="P:somatic hypermutation of immunoglobulin genes"/>
    <property type="evidence" value="ECO:0000315"/>
    <property type="project" value="UniProtKB"/>
</dbReference>
<dbReference type="CDD" id="cd01283">
    <property type="entry name" value="cytidine_deaminase"/>
    <property type="match status" value="1"/>
</dbReference>
<dbReference type="FunFam" id="3.40.140.10:FF:000022">
    <property type="entry name" value="Single-stranded DNA cytosine deaminase"/>
    <property type="match status" value="1"/>
</dbReference>
<dbReference type="Gene3D" id="3.40.140.10">
    <property type="entry name" value="Cytidine Deaminase, domain 2"/>
    <property type="match status" value="1"/>
</dbReference>
<dbReference type="InterPro" id="IPR016192">
    <property type="entry name" value="APOBEC/CMP_deaminase_Zn-bd"/>
</dbReference>
<dbReference type="InterPro" id="IPR050610">
    <property type="entry name" value="APOBEC_Cyt_Deaminase"/>
</dbReference>
<dbReference type="InterPro" id="IPR013158">
    <property type="entry name" value="APOBEC_N"/>
</dbReference>
<dbReference type="InterPro" id="IPR002125">
    <property type="entry name" value="CMP_dCMP_dom"/>
</dbReference>
<dbReference type="InterPro" id="IPR016193">
    <property type="entry name" value="Cytidine_deaminase-like"/>
</dbReference>
<dbReference type="PANTHER" id="PTHR13857">
    <property type="entry name" value="MRNA EDITING ENZYME"/>
    <property type="match status" value="1"/>
</dbReference>
<dbReference type="PANTHER" id="PTHR13857:SF10">
    <property type="entry name" value="SINGLE-STRANDED DNA CYTOSINE DEAMINASE"/>
    <property type="match status" value="1"/>
</dbReference>
<dbReference type="Pfam" id="PF08210">
    <property type="entry name" value="APOBEC_N"/>
    <property type="match status" value="1"/>
</dbReference>
<dbReference type="SUPFAM" id="SSF53927">
    <property type="entry name" value="Cytidine deaminase-like"/>
    <property type="match status" value="1"/>
</dbReference>
<dbReference type="PROSITE" id="PS00903">
    <property type="entry name" value="CYT_DCMP_DEAMINASES_1"/>
    <property type="match status" value="1"/>
</dbReference>
<dbReference type="PROSITE" id="PS51747">
    <property type="entry name" value="CYT_DCMP_DEAMINASES_2"/>
    <property type="match status" value="1"/>
</dbReference>
<sequence>MDSLLMNRRKFLYQFKNVRWAKGRRETYLCYVVKRRDSATSFSLDFGYLRNKNGCHVELLFLRYISDWDLDPGRCYRVTWFTSWSPCYDCARHVADFLRGNPNLSLRIFTARLYFCEDRKAEPEGLRRLHRAGVQIAIMTFKDYFYCWNTFVENHERTFKAWEGLHENSVRLSRQLRRILLPLYEVDDLRDAFRTLGL</sequence>
<gene>
    <name type="primary">AICDA</name>
    <name type="synonym">AID</name>
</gene>
<evidence type="ECO:0000250" key="1">
    <source>
        <dbReference type="UniProtKB" id="P0ABF6"/>
    </source>
</evidence>
<evidence type="ECO:0000250" key="2">
    <source>
        <dbReference type="UniProtKB" id="Q9WVE0"/>
    </source>
</evidence>
<evidence type="ECO:0000255" key="3">
    <source>
        <dbReference type="PROSITE-ProRule" id="PRU01083"/>
    </source>
</evidence>
<evidence type="ECO:0000269" key="4">
    <source>
    </source>
</evidence>
<evidence type="ECO:0000269" key="5">
    <source>
    </source>
</evidence>
<evidence type="ECO:0000269" key="6">
    <source>
    </source>
</evidence>
<evidence type="ECO:0000269" key="7">
    <source>
    </source>
</evidence>
<evidence type="ECO:0000269" key="8">
    <source>
    </source>
</evidence>
<evidence type="ECO:0000269" key="9">
    <source>
    </source>
</evidence>
<evidence type="ECO:0000269" key="10">
    <source>
    </source>
</evidence>
<evidence type="ECO:0000269" key="11">
    <source>
    </source>
</evidence>
<evidence type="ECO:0000269" key="12">
    <source>
    </source>
</evidence>
<evidence type="ECO:0000269" key="13">
    <source>
    </source>
</evidence>
<evidence type="ECO:0000269" key="14">
    <source>
    </source>
</evidence>
<evidence type="ECO:0000269" key="15">
    <source>
    </source>
</evidence>
<evidence type="ECO:0000269" key="16">
    <source>
    </source>
</evidence>
<evidence type="ECO:0000269" key="17">
    <source>
    </source>
</evidence>
<evidence type="ECO:0000269" key="18">
    <source>
    </source>
</evidence>
<evidence type="ECO:0000269" key="19">
    <source>
    </source>
</evidence>
<evidence type="ECO:0000269" key="20">
    <source>
    </source>
</evidence>
<evidence type="ECO:0000269" key="21">
    <source>
    </source>
</evidence>
<evidence type="ECO:0000303" key="22">
    <source ref="4"/>
</evidence>
<evidence type="ECO:0000305" key="23"/>
<evidence type="ECO:0007829" key="24">
    <source>
        <dbReference type="PDB" id="5W0R"/>
    </source>
</evidence>
<evidence type="ECO:0007829" key="25">
    <source>
        <dbReference type="PDB" id="5W0U"/>
    </source>
</evidence>
<evidence type="ECO:0007829" key="26">
    <source>
        <dbReference type="PDB" id="5W1C"/>
    </source>
</evidence>
<reference key="1">
    <citation type="journal article" date="2000" name="Genomics">
        <title>Isolation, tissue distribution, and chromosomal localization of the human activation-induced cytidine deaminase (hAID) gene.</title>
        <authorList>
            <person name="Muto T."/>
            <person name="Muramatsu M."/>
            <person name="Taniwaki M."/>
            <person name="Kinoshita K."/>
            <person name="Honjo T."/>
        </authorList>
    </citation>
    <scope>NUCLEOTIDE SEQUENCE [GENOMIC DNA / MRNA] (ISOFORM 1)</scope>
</reference>
<reference key="2">
    <citation type="journal article" date="2000" name="Cell">
        <title>Activation-induced cytidine deaminase (AID) deficiency causes the autosomal recessive form of the Hyper-IgM syndrome (HIGM2).</title>
        <authorList>
            <person name="Revy P."/>
            <person name="Muto T."/>
            <person name="Levy Y."/>
            <person name="Geissmann F."/>
            <person name="Plebani A."/>
            <person name="Sanal O."/>
            <person name="Catalan N."/>
            <person name="Forveille M."/>
            <person name="Dufourcq-Lagelouse R."/>
            <person name="Gennery A."/>
            <person name="Tezcan I."/>
            <person name="Ersoy F."/>
            <person name="Kayserili H."/>
            <person name="Ugazio A.G."/>
            <person name="Brousse N."/>
            <person name="Muramatsu M."/>
            <person name="Notarangelo L.D."/>
            <person name="Kinoshita K."/>
            <person name="Honjo T."/>
            <person name="Fischer A."/>
            <person name="Durandy A."/>
        </authorList>
    </citation>
    <scope>NUCLEOTIDE SEQUENCE [GENOMIC DNA / MRNA] (ISOFORM 1)</scope>
    <scope>VARIANTS HIGM2 TRP-24; ARG-80; PRO-106; VAL-139 AND SER-151</scope>
</reference>
<reference key="3">
    <citation type="journal article" date="2002" name="Proc. Natl. Acad. Sci. U.S.A.">
        <title>Somatic hypermutation of the AID transgene in B and non-B cells.</title>
        <authorList>
            <person name="Martin A."/>
            <person name="Scharff M.D."/>
        </authorList>
    </citation>
    <scope>NUCLEOTIDE SEQUENCE [MRNA]</scope>
</reference>
<reference key="4">
    <citation type="submission" date="2004-01" db="EMBL/GenBank/DDBJ databases">
        <title>Intracellular localization of AID isoforms.</title>
        <authorList>
            <person name="Roa S."/>
            <person name="Gonzalez-Sarmiento R."/>
        </authorList>
    </citation>
    <scope>NUCLEOTIDE SEQUENCE [MRNA] (ISOFORM 2)</scope>
</reference>
<reference key="5">
    <citation type="submission" date="2003-05" db="EMBL/GenBank/DDBJ databases">
        <title>Cloning of human full-length CDSs in BD Creator(TM) system donor vector.</title>
        <authorList>
            <person name="Kalnine N."/>
            <person name="Chen X."/>
            <person name="Rolfs A."/>
            <person name="Halleck A."/>
            <person name="Hines L."/>
            <person name="Eisenstein S."/>
            <person name="Koundinya M."/>
            <person name="Raphael J."/>
            <person name="Moreira D."/>
            <person name="Kelley T."/>
            <person name="LaBaer J."/>
            <person name="Lin Y."/>
            <person name="Phelan M."/>
            <person name="Farmer A."/>
        </authorList>
    </citation>
    <scope>NUCLEOTIDE SEQUENCE [LARGE SCALE MRNA] (ISOFORM 1)</scope>
</reference>
<reference key="6">
    <citation type="journal article" date="2006" name="Nature">
        <title>The finished DNA sequence of human chromosome 12.</title>
        <authorList>
            <person name="Scherer S.E."/>
            <person name="Muzny D.M."/>
            <person name="Buhay C.J."/>
            <person name="Chen R."/>
            <person name="Cree A."/>
            <person name="Ding Y."/>
            <person name="Dugan-Rocha S."/>
            <person name="Gill R."/>
            <person name="Gunaratne P."/>
            <person name="Harris R.A."/>
            <person name="Hawes A.C."/>
            <person name="Hernandez J."/>
            <person name="Hodgson A.V."/>
            <person name="Hume J."/>
            <person name="Jackson A."/>
            <person name="Khan Z.M."/>
            <person name="Kovar-Smith C."/>
            <person name="Lewis L.R."/>
            <person name="Lozado R.J."/>
            <person name="Metzker M.L."/>
            <person name="Milosavljevic A."/>
            <person name="Miner G.R."/>
            <person name="Montgomery K.T."/>
            <person name="Morgan M.B."/>
            <person name="Nazareth L.V."/>
            <person name="Scott G."/>
            <person name="Sodergren E."/>
            <person name="Song X.-Z."/>
            <person name="Steffen D."/>
            <person name="Lovering R.C."/>
            <person name="Wheeler D.A."/>
            <person name="Worley K.C."/>
            <person name="Yuan Y."/>
            <person name="Zhang Z."/>
            <person name="Adams C.Q."/>
            <person name="Ansari-Lari M.A."/>
            <person name="Ayele M."/>
            <person name="Brown M.J."/>
            <person name="Chen G."/>
            <person name="Chen Z."/>
            <person name="Clerc-Blankenburg K.P."/>
            <person name="Davis C."/>
            <person name="Delgado O."/>
            <person name="Dinh H.H."/>
            <person name="Draper H."/>
            <person name="Gonzalez-Garay M.L."/>
            <person name="Havlak P."/>
            <person name="Jackson L.R."/>
            <person name="Jacob L.S."/>
            <person name="Kelly S.H."/>
            <person name="Li L."/>
            <person name="Li Z."/>
            <person name="Liu J."/>
            <person name="Liu W."/>
            <person name="Lu J."/>
            <person name="Maheshwari M."/>
            <person name="Nguyen B.-V."/>
            <person name="Okwuonu G.O."/>
            <person name="Pasternak S."/>
            <person name="Perez L.M."/>
            <person name="Plopper F.J.H."/>
            <person name="Santibanez J."/>
            <person name="Shen H."/>
            <person name="Tabor P.E."/>
            <person name="Verduzco D."/>
            <person name="Waldron L."/>
            <person name="Wang Q."/>
            <person name="Williams G.A."/>
            <person name="Zhang J."/>
            <person name="Zhou J."/>
            <person name="Allen C.C."/>
            <person name="Amin A.G."/>
            <person name="Anyalebechi V."/>
            <person name="Bailey M."/>
            <person name="Barbaria J.A."/>
            <person name="Bimage K.E."/>
            <person name="Bryant N.P."/>
            <person name="Burch P.E."/>
            <person name="Burkett C.E."/>
            <person name="Burrell K.L."/>
            <person name="Calderon E."/>
            <person name="Cardenas V."/>
            <person name="Carter K."/>
            <person name="Casias K."/>
            <person name="Cavazos I."/>
            <person name="Cavazos S.R."/>
            <person name="Ceasar H."/>
            <person name="Chacko J."/>
            <person name="Chan S.N."/>
            <person name="Chavez D."/>
            <person name="Christopoulos C."/>
            <person name="Chu J."/>
            <person name="Cockrell R."/>
            <person name="Cox C.D."/>
            <person name="Dang M."/>
            <person name="Dathorne S.R."/>
            <person name="David R."/>
            <person name="Davis C.M."/>
            <person name="Davy-Carroll L."/>
            <person name="Deshazo D.R."/>
            <person name="Donlin J.E."/>
            <person name="D'Souza L."/>
            <person name="Eaves K.A."/>
            <person name="Egan A."/>
            <person name="Emery-Cohen A.J."/>
            <person name="Escotto M."/>
            <person name="Flagg N."/>
            <person name="Forbes L.D."/>
            <person name="Gabisi A.M."/>
            <person name="Garza M."/>
            <person name="Hamilton C."/>
            <person name="Henderson N."/>
            <person name="Hernandez O."/>
            <person name="Hines S."/>
            <person name="Hogues M.E."/>
            <person name="Huang M."/>
            <person name="Idlebird D.G."/>
            <person name="Johnson R."/>
            <person name="Jolivet A."/>
            <person name="Jones S."/>
            <person name="Kagan R."/>
            <person name="King L.M."/>
            <person name="Leal B."/>
            <person name="Lebow H."/>
            <person name="Lee S."/>
            <person name="LeVan J.M."/>
            <person name="Lewis L.C."/>
            <person name="London P."/>
            <person name="Lorensuhewa L.M."/>
            <person name="Loulseged H."/>
            <person name="Lovett D.A."/>
            <person name="Lucier A."/>
            <person name="Lucier R.L."/>
            <person name="Ma J."/>
            <person name="Madu R.C."/>
            <person name="Mapua P."/>
            <person name="Martindale A.D."/>
            <person name="Martinez E."/>
            <person name="Massey E."/>
            <person name="Mawhiney S."/>
            <person name="Meador M.G."/>
            <person name="Mendez S."/>
            <person name="Mercado C."/>
            <person name="Mercado I.C."/>
            <person name="Merritt C.E."/>
            <person name="Miner Z.L."/>
            <person name="Minja E."/>
            <person name="Mitchell T."/>
            <person name="Mohabbat F."/>
            <person name="Mohabbat K."/>
            <person name="Montgomery B."/>
            <person name="Moore N."/>
            <person name="Morris S."/>
            <person name="Munidasa M."/>
            <person name="Ngo R.N."/>
            <person name="Nguyen N.B."/>
            <person name="Nickerson E."/>
            <person name="Nwaokelemeh O.O."/>
            <person name="Nwokenkwo S."/>
            <person name="Obregon M."/>
            <person name="Oguh M."/>
            <person name="Oragunye N."/>
            <person name="Oviedo R.J."/>
            <person name="Parish B.J."/>
            <person name="Parker D.N."/>
            <person name="Parrish J."/>
            <person name="Parks K.L."/>
            <person name="Paul H.A."/>
            <person name="Payton B.A."/>
            <person name="Perez A."/>
            <person name="Perrin W."/>
            <person name="Pickens A."/>
            <person name="Primus E.L."/>
            <person name="Pu L.-L."/>
            <person name="Puazo M."/>
            <person name="Quiles M.M."/>
            <person name="Quiroz J.B."/>
            <person name="Rabata D."/>
            <person name="Reeves K."/>
            <person name="Ruiz S.J."/>
            <person name="Shao H."/>
            <person name="Sisson I."/>
            <person name="Sonaike T."/>
            <person name="Sorelle R.P."/>
            <person name="Sutton A.E."/>
            <person name="Svatek A.F."/>
            <person name="Svetz L.A."/>
            <person name="Tamerisa K.S."/>
            <person name="Taylor T.R."/>
            <person name="Teague B."/>
            <person name="Thomas N."/>
            <person name="Thorn R.D."/>
            <person name="Trejos Z.Y."/>
            <person name="Trevino B.K."/>
            <person name="Ukegbu O.N."/>
            <person name="Urban J.B."/>
            <person name="Vasquez L.I."/>
            <person name="Vera V.A."/>
            <person name="Villasana D.M."/>
            <person name="Wang L."/>
            <person name="Ward-Moore S."/>
            <person name="Warren J.T."/>
            <person name="Wei X."/>
            <person name="White F."/>
            <person name="Williamson A.L."/>
            <person name="Wleczyk R."/>
            <person name="Wooden H.S."/>
            <person name="Wooden S.H."/>
            <person name="Yen J."/>
            <person name="Yoon L."/>
            <person name="Yoon V."/>
            <person name="Zorrilla S.E."/>
            <person name="Nelson D."/>
            <person name="Kucherlapati R."/>
            <person name="Weinstock G."/>
            <person name="Gibbs R.A."/>
        </authorList>
    </citation>
    <scope>NUCLEOTIDE SEQUENCE [LARGE SCALE GENOMIC DNA]</scope>
</reference>
<reference key="7">
    <citation type="journal article" date="2004" name="Genome Res.">
        <title>The status, quality, and expansion of the NIH full-length cDNA project: the Mammalian Gene Collection (MGC).</title>
        <authorList>
            <consortium name="The MGC Project Team"/>
        </authorList>
    </citation>
    <scope>NUCLEOTIDE SEQUENCE [LARGE SCALE MRNA] (ISOFORM 1)</scope>
    <source>
        <tissue>B-cell</tissue>
    </source>
</reference>
<reference key="8">
    <citation type="journal article" date="2004" name="Proc. Natl. Acad. Sci. U.S.A.">
        <title>Activation-induced cytidine deaminase shuttles between nucleus and cytoplasm like apolipoprotein B mRNA editing catalytic polypeptide 1.</title>
        <authorList>
            <person name="Ito S."/>
            <person name="Nagaoka H."/>
            <person name="Shinkura R."/>
            <person name="Begum N."/>
            <person name="Muramatsu M."/>
            <person name="Nakata M."/>
            <person name="Honjo T."/>
        </authorList>
    </citation>
    <scope>SUBCELLULAR LOCATION</scope>
</reference>
<reference key="9">
    <citation type="journal article" date="2006" name="Proc. Natl. Acad. Sci. U.S.A.">
        <title>PKA-mediated phosphorylation regulates the function of activation-induced deaminase (AID) in B cells.</title>
        <authorList>
            <person name="Pasqualucci L."/>
            <person name="Kitaura Y."/>
            <person name="Gu H."/>
            <person name="Dalla-Favera R."/>
        </authorList>
    </citation>
    <scope>PHOSPHORYLATION AT THR-27 AND SER-38</scope>
    <scope>INTERACTION WITH PRKACA AND PRKAR1A</scope>
    <scope>MUTAGENESIS OF THR-27 AND SER-38</scope>
</reference>
<reference key="10">
    <citation type="journal article" date="2008" name="Mol. Cell">
        <title>Interaction between antibody-diversification enzyme AID and spliceosome-associated factor CTNNBL1.</title>
        <authorList>
            <person name="Conticello S.G."/>
            <person name="Ganesh K."/>
            <person name="Xue K."/>
            <person name="Lu M."/>
            <person name="Rada C."/>
            <person name="Neuberger M.S."/>
        </authorList>
    </citation>
    <scope>INTERACTION WITH CTNNBL1</scope>
    <scope>FUNCTION</scope>
    <scope>CATALYTIC ACTIVITY</scope>
    <scope>SUBCELLULAR LOCATION</scope>
    <scope>PHOSPHORYLATION AT SER-38</scope>
    <scope>IDENTIFICATION BY MASS SPECTROMETRY</scope>
    <scope>MUTAGENESIS OF 39-ALA--PHE-42 AND SER-38</scope>
</reference>
<reference key="11">
    <citation type="journal article" date="2010" name="J. Biol. Chem.">
        <title>GANP-mediated recruitment of activation-induced cytidine deaminase to cell nuclei and to immunoglobulin variable region DNA.</title>
        <authorList>
            <person name="Maeda K."/>
            <person name="Singh S.K."/>
            <person name="Eda K."/>
            <person name="Kitabatake M."/>
            <person name="Pham P."/>
            <person name="Goodman M.F."/>
            <person name="Sakaguchi N."/>
        </authorList>
    </citation>
    <scope>INTERACTION WITH MCM3AP</scope>
</reference>
<reference key="12">
    <citation type="journal article" date="2011" name="Cell">
        <title>Hydroxylation of 5-methylcytosine by TET1 promotes active DNA demethylation in the adult brain.</title>
        <authorList>
            <person name="Guo J.U."/>
            <person name="Su Y."/>
            <person name="Zhong C."/>
            <person name="Ming G.L."/>
            <person name="Song H."/>
        </authorList>
    </citation>
    <scope>FUNCTION IN DNA DEMETHYLATION</scope>
</reference>
<reference key="13">
    <citation type="journal article" date="2011" name="J. Biol. Chem.">
        <title>CTNNBL1 is a novel nuclear localization sequence-binding protein that recognizes RNA-splicing factors CDC5L and Prp31.</title>
        <authorList>
            <person name="Ganesh K."/>
            <person name="Adam S."/>
            <person name="Taylor B."/>
            <person name="Simpson P."/>
            <person name="Rada C."/>
            <person name="Neuberger M."/>
        </authorList>
    </citation>
    <scope>INTERACTION WITH CTNNBL1</scope>
    <scope>FUNCTION</scope>
    <scope>SUBCELLULAR LOCATION</scope>
    <scope>MUTAGENESIS OF LYS-10; VAL-18; ARG-19; TRP-20; ARG-50; ARG-112 AND PHE-193</scope>
    <scope>CHARACTERIZATION OF VARIANT TRP-24</scope>
</reference>
<reference key="14">
    <citation type="journal article" date="2011" name="J. Biol. Chem.">
        <title>Phosphorylation directly regulates the intrinsic DNA cytidine deaminase activity of activation-induced deaminase and APOBEC3G protein.</title>
        <authorList>
            <person name="Demorest Z.L."/>
            <person name="Li M."/>
            <person name="Harris R.S."/>
        </authorList>
    </citation>
    <scope>SUBCELLULAR LOCATION</scope>
    <scope>MUTAGENESIS OF THR-27</scope>
</reference>
<reference key="15">
    <citation type="journal article" date="2011" name="Proc. Natl. Acad. Sci. U.S.A.">
        <title>Histone chaperone Spt6 is required for class switch recombination but not somatic hypermutation.</title>
        <authorList>
            <person name="Okazaki I.M."/>
            <person name="Okawa K."/>
            <person name="Kobayashi M."/>
            <person name="Yoshikawa K."/>
            <person name="Kawamoto S."/>
            <person name="Nagaoka H."/>
            <person name="Shinkura R."/>
            <person name="Kitawaki Y."/>
            <person name="Taniguchi H."/>
            <person name="Natsume T."/>
            <person name="Iemura S."/>
            <person name="Honjo T."/>
        </authorList>
    </citation>
    <scope>FUNCTION</scope>
    <scope>INTERACTION WITH SUPT6H</scope>
</reference>
<reference key="16">
    <citation type="journal article" date="2012" name="J. Exp. Med.">
        <title>BCL6 positively regulates AID and germinal center gene expression via repression of miR-155.</title>
        <authorList>
            <person name="Basso K."/>
            <person name="Schneider C."/>
            <person name="Shen Q."/>
            <person name="Holmes A.B."/>
            <person name="Setty M."/>
            <person name="Leslie C."/>
            <person name="Dalla-Favera R."/>
        </authorList>
    </citation>
    <scope>INDUCTION</scope>
    <scope>SUBCELLULAR LOCATION</scope>
    <scope>TISSUE SPECIFICITY</scope>
</reference>
<reference key="17">
    <citation type="journal article" date="2013" name="Proc. Natl. Acad. Sci. U.S.A.">
        <title>Solubility-based genetic screen identifies RING finger protein 126 as an E3 ligase for activation-induced cytidine deaminase.</title>
        <authorList>
            <person name="Delker R.K."/>
            <person name="Zhou Y."/>
            <person name="Strikoudis A."/>
            <person name="Stebbins C.E."/>
            <person name="Papavasiliou F.N."/>
        </authorList>
    </citation>
    <scope>INTERACTION WITH RNF126</scope>
    <scope>UBIQUITINATION BY RNF126</scope>
</reference>
<reference key="18">
    <citation type="journal article" date="2020" name="J. Clin. Invest.">
        <title>Disease-associated CTNNBL1 mutation impairs somatic hypermutation by decreasing nuclear AID.</title>
        <authorList>
            <person name="Kuhny M."/>
            <person name="Forbes L.R."/>
            <person name="Cakan E."/>
            <person name="Vega-Loza A."/>
            <person name="Kostiuk V."/>
            <person name="Dinesh R.K."/>
            <person name="Glauzy S."/>
            <person name="Stray-Pedersen A."/>
            <person name="Pezzi A.E."/>
            <person name="Hanson I.C."/>
            <person name="Vargas-Hernandez A."/>
            <person name="Xu M.L."/>
            <person name="Coban-Akdemir Z.H."/>
            <person name="Jhangiani S.N."/>
            <person name="Muzny D.M."/>
            <person name="Gibbs R.A."/>
            <person name="Lupski J.R."/>
            <person name="Chinn I.K."/>
            <person name="Schatz D.G."/>
            <person name="Orange J.S."/>
            <person name="Meffre E."/>
        </authorList>
    </citation>
    <scope>INTERACTION WITH CTNNBL1</scope>
    <scope>SUBCELLULAR LOCATION</scope>
</reference>
<reference key="19">
    <citation type="journal article" date="2016" name="DNA Repair">
        <title>Structural analysis of the activation-induced deoxycytidine deaminase required in immunoglobulin diversification.</title>
        <authorList>
            <person name="Pham P."/>
            <person name="Afif S.A."/>
            <person name="Shimoda M."/>
            <person name="Maeda K."/>
            <person name="Sakaguchi N."/>
            <person name="Pedersen L.C."/>
            <person name="Goodman M.F."/>
        </authorList>
    </citation>
    <scope>X-RAY CRYSTALLOGRAPHY (2.81 ANGSTROMS) OF 23-183 IN COMPLEX WITH ZINC</scope>
</reference>
<reference key="20">
    <citation type="journal article" date="2001" name="J. Allergy Clin. Immunol.">
        <title>Association between a new polymorphism in the activation-induced cytidine deaminase gene and atopic asthma and the regulation of total serum IgE levels.</title>
        <authorList>
            <person name="Noguchi E."/>
            <person name="Shibasaki M."/>
            <person name="Inudou M."/>
            <person name="Kamioka M."/>
            <person name="Yokouchi Y."/>
            <person name="Yamakawa-Kobayashi K."/>
            <person name="Hamaguchi H."/>
            <person name="Matsui A."/>
            <person name="Arinami T."/>
        </authorList>
    </citation>
    <scope>VARIANT CYS-25</scope>
</reference>
<reference key="21">
    <citation type="journal article" date="2004" name="Clin. Immunol.">
        <title>Clinical, immunologic and genetic analysis of 29 patients with autosomal recessive hyper-IgM syndrome due to activation-induced cytidine deaminase deficiency.</title>
        <authorList>
            <person name="Quartier P."/>
            <person name="Bustamante J."/>
            <person name="Sanal O."/>
            <person name="Plebani A."/>
            <person name="Debre M."/>
            <person name="Deville A."/>
            <person name="Litzman J."/>
            <person name="Levy J."/>
            <person name="Fermand J.P."/>
            <person name="Lane P."/>
            <person name="Horneff G."/>
            <person name="Aksu G."/>
            <person name="Yalcin I."/>
            <person name="Davies G."/>
            <person name="Tezcan I."/>
            <person name="Ersoy F."/>
            <person name="Catalan N."/>
            <person name="Imai K."/>
            <person name="Fischer A."/>
            <person name="Durandy A."/>
        </authorList>
    </citation>
    <scope>VARIANTS HIGM2 TRP-24; TYR-56; ARG-80; ARG-87; PRO-106; VAL-139; SER-151 AND SER-174</scope>
</reference>
<reference key="22">
    <citation type="journal article" date="2013" name="Clin. Immunol.">
        <title>A novel activation-induced cytidine deaminase (AID) mutation in Brazilian patients with hyper-IgM type 2 syndrome.</title>
        <authorList>
            <person name="Caratao N."/>
            <person name="Cortesao C.S."/>
            <person name="Reis P.H."/>
            <person name="Freitas R.F."/>
            <person name="Jacob C.M."/>
            <person name="Pastorino A.C."/>
            <person name="Carneiro-Sampaio M."/>
            <person name="Barreto V.M."/>
        </authorList>
    </citation>
    <scope>VARIANT HIGM2 LEU-15</scope>
</reference>
<reference key="23">
    <citation type="journal article" date="2016" name="Immunogenetics">
        <title>Novel and recurrent AID mutations underlie prevalent autosomal recessive form of HIGM in consanguineous patients.</title>
        <authorList>
            <person name="Ouadani H."/>
            <person name="Ben-Mustapha I."/>
            <person name="Ben-ali M."/>
            <person name="Ben-khemis L."/>
            <person name="Largueche B."/>
            <person name="Boussoffara R."/>
            <person name="Maalej S."/>
            <person name="Fetni I."/>
            <person name="Hassayoun S."/>
            <person name="Mahfoudh A."/>
            <person name="Mellouli F."/>
            <person name="Yalaoui S."/>
            <person name="Masmoudi H."/>
            <person name="Bejaoui M."/>
            <person name="Barbouche M.R."/>
        </authorList>
    </citation>
    <scope>VARIANTS HIGM2 HIS-31 AND PRO-130</scope>
</reference>
<reference key="24">
    <citation type="journal article" date="2016" name="Mol. Immunol.">
        <title>Activation induced cytidine deaminase mutant (AID-His130Pro) from Hyper IgM 2 patient retained mutagenic activity on SHM artificial substrate.</title>
        <authorList>
            <person name="Ouadani H."/>
            <person name="Ben-Mustapha I."/>
            <person name="Ben-Ali M."/>
            <person name="Largueche B."/>
            <person name="Jovanic T."/>
            <person name="Garcia S."/>
            <person name="Arcangioli B."/>
            <person name="Elloumi-Zghal H."/>
            <person name="Fathallah D."/>
            <person name="Hachicha M."/>
            <person name="Masmoudi H."/>
            <person name="Rougeon F."/>
            <person name="Barbouche M.R."/>
        </authorList>
    </citation>
    <scope>CHARACTERIZATION OF VARIANTS HIGM2 TYR-56 AND PRO-130</scope>
    <scope>FUNCTION</scope>
</reference>